<sequence length="444" mass="46861">MAEETQVLVKFVTKLPAHLRVPETPVAVPSDLKRYGLSQIINHLLALDPPRPFDFLIDGELVRKSLEQHLLAHNLSAESTLEVEYVPAVVPPQQKNSTPHDDWVSSVDGSRCAPASSSGGSPSGVVVSGSYDGLLRLWNGDLEAVASVSAHAGGVNCVRFLPKSQGDLLLTSGKDRLVKMWQLSSSEEEDAGPSCRLVATYRGHEDGVEAVAASPSGRRFASCGWDGKLLVWEGGEQLRWAAGTAEASKKKRKTGTANGSAAAGAGGADLRGHLHCVSSVAWPAENSLFSGGWDHSVRRWDVSSGAAADTYNGSKAVLCIASHAASPALVAFGCSDRALRLWDTRGKAGSDALAVTTQGAHGGWVTAVAWCPSSQHHIASASHDGTIKMWDIRTQIPLGMLSHHTDKVLALGWLGGAEAGHARGLVSGGADCQLRMYESDYIVS</sequence>
<reference key="1">
    <citation type="journal article" date="2007" name="Science">
        <title>The Chlamydomonas genome reveals the evolution of key animal and plant functions.</title>
        <authorList>
            <person name="Merchant S.S."/>
            <person name="Prochnik S.E."/>
            <person name="Vallon O."/>
            <person name="Harris E.H."/>
            <person name="Karpowicz S.J."/>
            <person name="Witman G.B."/>
            <person name="Terry A."/>
            <person name="Salamov A."/>
            <person name="Fritz-Laylin L.K."/>
            <person name="Marechal-Drouard L."/>
            <person name="Marshall W.F."/>
            <person name="Qu L.H."/>
            <person name="Nelson D.R."/>
            <person name="Sanderfoot A.A."/>
            <person name="Spalding M.H."/>
            <person name="Kapitonov V.V."/>
            <person name="Ren Q."/>
            <person name="Ferris P."/>
            <person name="Lindquist E."/>
            <person name="Shapiro H."/>
            <person name="Lucas S.M."/>
            <person name="Grimwood J."/>
            <person name="Schmutz J."/>
            <person name="Cardol P."/>
            <person name="Cerutti H."/>
            <person name="Chanfreau G."/>
            <person name="Chen C.L."/>
            <person name="Cognat V."/>
            <person name="Croft M.T."/>
            <person name="Dent R."/>
            <person name="Dutcher S."/>
            <person name="Fernandez E."/>
            <person name="Fukuzawa H."/>
            <person name="Gonzalez-Ballester D."/>
            <person name="Gonzalez-Halphen D."/>
            <person name="Hallmann A."/>
            <person name="Hanikenne M."/>
            <person name="Hippler M."/>
            <person name="Inwood W."/>
            <person name="Jabbari K."/>
            <person name="Kalanon M."/>
            <person name="Kuras R."/>
            <person name="Lefebvre P.A."/>
            <person name="Lemaire S.D."/>
            <person name="Lobanov A.V."/>
            <person name="Lohr M."/>
            <person name="Manuell A."/>
            <person name="Meier I."/>
            <person name="Mets L."/>
            <person name="Mittag M."/>
            <person name="Mittelmeier T."/>
            <person name="Moroney J.V."/>
            <person name="Moseley J."/>
            <person name="Napoli C."/>
            <person name="Nedelcu A.M."/>
            <person name="Niyogi K."/>
            <person name="Novoselov S.V."/>
            <person name="Paulsen I.T."/>
            <person name="Pazour G.J."/>
            <person name="Purton S."/>
            <person name="Ral J.P."/>
            <person name="Riano-Pachon D.M."/>
            <person name="Riekhof W."/>
            <person name="Rymarquis L."/>
            <person name="Schroda M."/>
            <person name="Stern D."/>
            <person name="Umen J."/>
            <person name="Willows R."/>
            <person name="Wilson N."/>
            <person name="Zimmer S.L."/>
            <person name="Allmer J."/>
            <person name="Balk J."/>
            <person name="Bisova K."/>
            <person name="Chen C.J."/>
            <person name="Elias M."/>
            <person name="Gendler K."/>
            <person name="Hauser C."/>
            <person name="Lamb M.R."/>
            <person name="Ledford H."/>
            <person name="Long J.C."/>
            <person name="Minagawa J."/>
            <person name="Page M.D."/>
            <person name="Pan J."/>
            <person name="Pootakham W."/>
            <person name="Roje S."/>
            <person name="Rose A."/>
            <person name="Stahlberg E."/>
            <person name="Terauchi A.M."/>
            <person name="Yang P."/>
            <person name="Ball S."/>
            <person name="Bowler C."/>
            <person name="Dieckmann C.L."/>
            <person name="Gladyshev V.N."/>
            <person name="Green P."/>
            <person name="Jorgensen R."/>
            <person name="Mayfield S."/>
            <person name="Mueller-Roeber B."/>
            <person name="Rajamani S."/>
            <person name="Sayre R.T."/>
            <person name="Brokstein P."/>
            <person name="Dubchak I."/>
            <person name="Goodstein D."/>
            <person name="Hornick L."/>
            <person name="Huang Y.W."/>
            <person name="Jhaveri J."/>
            <person name="Luo Y."/>
            <person name="Martinez D."/>
            <person name="Ngau W.C."/>
            <person name="Otillar B."/>
            <person name="Poliakov A."/>
            <person name="Porter A."/>
            <person name="Szajkowski L."/>
            <person name="Werner G."/>
            <person name="Zhou K."/>
            <person name="Grigoriev I.V."/>
            <person name="Rokhsar D.S."/>
            <person name="Grossman A.R."/>
        </authorList>
    </citation>
    <scope>NUCLEOTIDE SEQUENCE [LARGE SCALE GENOMIC DNA]</scope>
    <source>
        <strain>CC-503</strain>
    </source>
</reference>
<accession>A8IR43</accession>
<gene>
    <name type="ORF">CHLREDRAFT_128420</name>
</gene>
<dbReference type="EMBL" id="DS496120">
    <property type="protein sequence ID" value="EDP04787.1"/>
    <property type="status" value="ALT_SEQ"/>
    <property type="molecule type" value="Genomic_DNA"/>
</dbReference>
<dbReference type="SMR" id="A8IR43"/>
<dbReference type="PaxDb" id="3055-EDP04787"/>
<dbReference type="ProMEX" id="A8IR43"/>
<dbReference type="eggNOG" id="KOG0313">
    <property type="taxonomic scope" value="Eukaryota"/>
</dbReference>
<dbReference type="HOGENOM" id="CLU_000288_57_0_1"/>
<dbReference type="GO" id="GO:0005730">
    <property type="term" value="C:nucleolus"/>
    <property type="evidence" value="ECO:0007669"/>
    <property type="project" value="UniProtKB-SubCell"/>
</dbReference>
<dbReference type="GO" id="GO:0005654">
    <property type="term" value="C:nucleoplasm"/>
    <property type="evidence" value="ECO:0007669"/>
    <property type="project" value="UniProtKB-SubCell"/>
</dbReference>
<dbReference type="GO" id="GO:0030687">
    <property type="term" value="C:preribosome, large subunit precursor"/>
    <property type="evidence" value="ECO:0007669"/>
    <property type="project" value="UniProtKB-UniRule"/>
</dbReference>
<dbReference type="GO" id="GO:0043021">
    <property type="term" value="F:ribonucleoprotein complex binding"/>
    <property type="evidence" value="ECO:0007669"/>
    <property type="project" value="UniProtKB-UniRule"/>
</dbReference>
<dbReference type="GO" id="GO:0000466">
    <property type="term" value="P:maturation of 5.8S rRNA from tricistronic rRNA transcript (SSU-rRNA, 5.8S rRNA, LSU-rRNA)"/>
    <property type="evidence" value="ECO:0007669"/>
    <property type="project" value="UniProtKB-UniRule"/>
</dbReference>
<dbReference type="GO" id="GO:0000463">
    <property type="term" value="P:maturation of LSU-rRNA from tricistronic rRNA transcript (SSU-rRNA, 5.8S rRNA, LSU-rRNA)"/>
    <property type="evidence" value="ECO:0007669"/>
    <property type="project" value="UniProtKB-UniRule"/>
</dbReference>
<dbReference type="CDD" id="cd00200">
    <property type="entry name" value="WD40"/>
    <property type="match status" value="1"/>
</dbReference>
<dbReference type="Gene3D" id="2.130.10.10">
    <property type="entry name" value="YVTN repeat-like/Quinoprotein amine dehydrogenase"/>
    <property type="match status" value="1"/>
</dbReference>
<dbReference type="HAMAP" id="MF_03029">
    <property type="entry name" value="WDR12"/>
    <property type="match status" value="1"/>
</dbReference>
<dbReference type="InterPro" id="IPR020472">
    <property type="entry name" value="G-protein_beta_WD-40_rep"/>
</dbReference>
<dbReference type="InterPro" id="IPR012972">
    <property type="entry name" value="NLE"/>
</dbReference>
<dbReference type="InterPro" id="IPR015943">
    <property type="entry name" value="WD40/YVTN_repeat-like_dom_sf"/>
</dbReference>
<dbReference type="InterPro" id="IPR019775">
    <property type="entry name" value="WD40_repeat_CS"/>
</dbReference>
<dbReference type="InterPro" id="IPR036322">
    <property type="entry name" value="WD40_repeat_dom_sf"/>
</dbReference>
<dbReference type="InterPro" id="IPR001680">
    <property type="entry name" value="WD40_rpt"/>
</dbReference>
<dbReference type="InterPro" id="IPR028599">
    <property type="entry name" value="WDR12/Ytm1"/>
</dbReference>
<dbReference type="PANTHER" id="PTHR19855:SF11">
    <property type="entry name" value="RIBOSOME BIOGENESIS PROTEIN WDR12"/>
    <property type="match status" value="1"/>
</dbReference>
<dbReference type="PANTHER" id="PTHR19855">
    <property type="entry name" value="WD40 REPEAT PROTEIN 12, 37"/>
    <property type="match status" value="1"/>
</dbReference>
<dbReference type="Pfam" id="PF08154">
    <property type="entry name" value="NLE"/>
    <property type="match status" value="1"/>
</dbReference>
<dbReference type="Pfam" id="PF00400">
    <property type="entry name" value="WD40"/>
    <property type="match status" value="6"/>
</dbReference>
<dbReference type="PRINTS" id="PR00320">
    <property type="entry name" value="GPROTEINBRPT"/>
</dbReference>
<dbReference type="SMART" id="SM00320">
    <property type="entry name" value="WD40"/>
    <property type="match status" value="7"/>
</dbReference>
<dbReference type="SUPFAM" id="SSF50978">
    <property type="entry name" value="WD40 repeat-like"/>
    <property type="match status" value="1"/>
</dbReference>
<dbReference type="PROSITE" id="PS00678">
    <property type="entry name" value="WD_REPEATS_1"/>
    <property type="match status" value="2"/>
</dbReference>
<dbReference type="PROSITE" id="PS50082">
    <property type="entry name" value="WD_REPEATS_2"/>
    <property type="match status" value="4"/>
</dbReference>
<dbReference type="PROSITE" id="PS50294">
    <property type="entry name" value="WD_REPEATS_REGION"/>
    <property type="match status" value="1"/>
</dbReference>
<evidence type="ECO:0000255" key="1">
    <source>
        <dbReference type="HAMAP-Rule" id="MF_03029"/>
    </source>
</evidence>
<evidence type="ECO:0000256" key="2">
    <source>
        <dbReference type="SAM" id="MobiDB-lite"/>
    </source>
</evidence>
<evidence type="ECO:0000305" key="3"/>
<organism>
    <name type="scientific">Chlamydomonas reinhardtii</name>
    <name type="common">Chlamydomonas smithii</name>
    <dbReference type="NCBI Taxonomy" id="3055"/>
    <lineage>
        <taxon>Eukaryota</taxon>
        <taxon>Viridiplantae</taxon>
        <taxon>Chlorophyta</taxon>
        <taxon>core chlorophytes</taxon>
        <taxon>Chlorophyceae</taxon>
        <taxon>CS clade</taxon>
        <taxon>Chlamydomonadales</taxon>
        <taxon>Chlamydomonadaceae</taxon>
        <taxon>Chlamydomonas</taxon>
    </lineage>
</organism>
<feature type="chain" id="PRO_0000369571" description="Ribosome biogenesis protein WDR12 homolog">
    <location>
        <begin position="1"/>
        <end position="444"/>
    </location>
</feature>
<feature type="repeat" description="WD 1">
    <location>
        <begin position="105"/>
        <end position="148"/>
    </location>
</feature>
<feature type="repeat" description="WD 2">
    <location>
        <begin position="150"/>
        <end position="191"/>
    </location>
</feature>
<feature type="repeat" description="WD 3">
    <location>
        <begin position="203"/>
        <end position="242"/>
    </location>
</feature>
<feature type="repeat" description="WD 4">
    <location>
        <begin position="272"/>
        <end position="310"/>
    </location>
</feature>
<feature type="repeat" description="WD 5">
    <location>
        <begin position="312"/>
        <end position="352"/>
    </location>
</feature>
<feature type="repeat" description="WD 6">
    <location>
        <begin position="360"/>
        <end position="400"/>
    </location>
</feature>
<feature type="repeat" description="WD 7">
    <location>
        <begin position="403"/>
        <end position="444"/>
    </location>
</feature>
<feature type="region of interest" description="Ubiquitin-like (UBL) domain" evidence="1">
    <location>
        <begin position="7"/>
        <end position="87"/>
    </location>
</feature>
<feature type="region of interest" description="Disordered" evidence="2">
    <location>
        <begin position="91"/>
        <end position="123"/>
    </location>
</feature>
<feature type="region of interest" description="Disordered" evidence="2">
    <location>
        <begin position="243"/>
        <end position="264"/>
    </location>
</feature>
<comment type="function">
    <text evidence="1">Required for maturation of ribosomal RNAs and formation of the large ribosomal subunit.</text>
</comment>
<comment type="subcellular location">
    <subcellularLocation>
        <location evidence="1">Nucleus</location>
        <location evidence="1">Nucleolus</location>
    </subcellularLocation>
    <subcellularLocation>
        <location evidence="1">Nucleus</location>
        <location evidence="1">Nucleoplasm</location>
    </subcellularLocation>
</comment>
<comment type="similarity">
    <text evidence="1">Belongs to the WD repeat WDR12/YTM1 family.</text>
</comment>
<comment type="sequence caution" evidence="3">
    <conflict type="erroneous gene model prediction">
        <sequence resource="EMBL-CDS" id="EDP04787"/>
    </conflict>
</comment>
<name>WDR12_CHLRE</name>
<proteinExistence type="inferred from homology"/>
<protein>
    <recommendedName>
        <fullName evidence="1">Ribosome biogenesis protein WDR12 homolog</fullName>
    </recommendedName>
</protein>
<keyword id="KW-0539">Nucleus</keyword>
<keyword id="KW-0677">Repeat</keyword>
<keyword id="KW-0690">Ribosome biogenesis</keyword>
<keyword id="KW-0698">rRNA processing</keyword>
<keyword id="KW-0853">WD repeat</keyword>